<organism>
    <name type="scientific">Burkholderia lata (strain ATCC 17760 / DSM 23089 / LMG 22485 / NCIMB 9086 / R18194 / 383)</name>
    <dbReference type="NCBI Taxonomy" id="482957"/>
    <lineage>
        <taxon>Bacteria</taxon>
        <taxon>Pseudomonadati</taxon>
        <taxon>Pseudomonadota</taxon>
        <taxon>Betaproteobacteria</taxon>
        <taxon>Burkholderiales</taxon>
        <taxon>Burkholderiaceae</taxon>
        <taxon>Burkholderia</taxon>
        <taxon>Burkholderia cepacia complex</taxon>
    </lineage>
</organism>
<protein>
    <recommendedName>
        <fullName evidence="1">Oxygen-dependent choline dehydrogenase</fullName>
        <shortName evidence="1">CDH</shortName>
        <shortName evidence="1">CHD</shortName>
        <ecNumber evidence="1">1.1.99.1</ecNumber>
    </recommendedName>
    <alternativeName>
        <fullName evidence="1">Betaine aldehyde dehydrogenase</fullName>
        <shortName evidence="1">BADH</shortName>
        <ecNumber evidence="1">1.2.1.8</ecNumber>
    </alternativeName>
</protein>
<dbReference type="EC" id="1.1.99.1" evidence="1"/>
<dbReference type="EC" id="1.2.1.8" evidence="1"/>
<dbReference type="EMBL" id="CP000152">
    <property type="protein sequence ID" value="ABB10667.1"/>
    <property type="molecule type" value="Genomic_DNA"/>
</dbReference>
<dbReference type="RefSeq" id="WP_011354162.1">
    <property type="nucleotide sequence ID" value="NC_007511.1"/>
</dbReference>
<dbReference type="SMR" id="Q39A44"/>
<dbReference type="GeneID" id="45096929"/>
<dbReference type="KEGG" id="bur:Bcep18194_B0553"/>
<dbReference type="PATRIC" id="fig|482957.22.peg.4156"/>
<dbReference type="HOGENOM" id="CLU_002865_7_1_4"/>
<dbReference type="UniPathway" id="UPA00529">
    <property type="reaction ID" value="UER00385"/>
</dbReference>
<dbReference type="Proteomes" id="UP000002705">
    <property type="component" value="Chromosome 2"/>
</dbReference>
<dbReference type="GO" id="GO:0016020">
    <property type="term" value="C:membrane"/>
    <property type="evidence" value="ECO:0007669"/>
    <property type="project" value="TreeGrafter"/>
</dbReference>
<dbReference type="GO" id="GO:0008802">
    <property type="term" value="F:betaine-aldehyde dehydrogenase (NAD+) activity"/>
    <property type="evidence" value="ECO:0007669"/>
    <property type="project" value="UniProtKB-EC"/>
</dbReference>
<dbReference type="GO" id="GO:0008812">
    <property type="term" value="F:choline dehydrogenase activity"/>
    <property type="evidence" value="ECO:0007669"/>
    <property type="project" value="UniProtKB-UniRule"/>
</dbReference>
<dbReference type="GO" id="GO:0050660">
    <property type="term" value="F:flavin adenine dinucleotide binding"/>
    <property type="evidence" value="ECO:0007669"/>
    <property type="project" value="InterPro"/>
</dbReference>
<dbReference type="GO" id="GO:0019285">
    <property type="term" value="P:glycine betaine biosynthetic process from choline"/>
    <property type="evidence" value="ECO:0007669"/>
    <property type="project" value="UniProtKB-UniRule"/>
</dbReference>
<dbReference type="Gene3D" id="3.50.50.60">
    <property type="entry name" value="FAD/NAD(P)-binding domain"/>
    <property type="match status" value="1"/>
</dbReference>
<dbReference type="Gene3D" id="3.30.560.10">
    <property type="entry name" value="Glucose Oxidase, domain 3"/>
    <property type="match status" value="1"/>
</dbReference>
<dbReference type="HAMAP" id="MF_00750">
    <property type="entry name" value="Choline_dehydrogen"/>
    <property type="match status" value="1"/>
</dbReference>
<dbReference type="InterPro" id="IPR011533">
    <property type="entry name" value="BetA"/>
</dbReference>
<dbReference type="InterPro" id="IPR036188">
    <property type="entry name" value="FAD/NAD-bd_sf"/>
</dbReference>
<dbReference type="InterPro" id="IPR012132">
    <property type="entry name" value="GMC_OxRdtase"/>
</dbReference>
<dbReference type="InterPro" id="IPR000172">
    <property type="entry name" value="GMC_OxRdtase_N"/>
</dbReference>
<dbReference type="InterPro" id="IPR007867">
    <property type="entry name" value="GMC_OxRtase_C"/>
</dbReference>
<dbReference type="NCBIfam" id="TIGR01810">
    <property type="entry name" value="betA"/>
    <property type="match status" value="1"/>
</dbReference>
<dbReference type="NCBIfam" id="NF002550">
    <property type="entry name" value="PRK02106.1"/>
    <property type="match status" value="1"/>
</dbReference>
<dbReference type="PANTHER" id="PTHR11552:SF147">
    <property type="entry name" value="CHOLINE DEHYDROGENASE, MITOCHONDRIAL"/>
    <property type="match status" value="1"/>
</dbReference>
<dbReference type="PANTHER" id="PTHR11552">
    <property type="entry name" value="GLUCOSE-METHANOL-CHOLINE GMC OXIDOREDUCTASE"/>
    <property type="match status" value="1"/>
</dbReference>
<dbReference type="Pfam" id="PF05199">
    <property type="entry name" value="GMC_oxred_C"/>
    <property type="match status" value="1"/>
</dbReference>
<dbReference type="Pfam" id="PF00732">
    <property type="entry name" value="GMC_oxred_N"/>
    <property type="match status" value="1"/>
</dbReference>
<dbReference type="PIRSF" id="PIRSF000137">
    <property type="entry name" value="Alcohol_oxidase"/>
    <property type="match status" value="1"/>
</dbReference>
<dbReference type="SUPFAM" id="SSF54373">
    <property type="entry name" value="FAD-linked reductases, C-terminal domain"/>
    <property type="match status" value="1"/>
</dbReference>
<dbReference type="SUPFAM" id="SSF51905">
    <property type="entry name" value="FAD/NAD(P)-binding domain"/>
    <property type="match status" value="1"/>
</dbReference>
<dbReference type="PROSITE" id="PS00623">
    <property type="entry name" value="GMC_OXRED_1"/>
    <property type="match status" value="1"/>
</dbReference>
<dbReference type="PROSITE" id="PS00624">
    <property type="entry name" value="GMC_OXRED_2"/>
    <property type="match status" value="1"/>
</dbReference>
<evidence type="ECO:0000255" key="1">
    <source>
        <dbReference type="HAMAP-Rule" id="MF_00750"/>
    </source>
</evidence>
<evidence type="ECO:0000256" key="2">
    <source>
        <dbReference type="SAM" id="MobiDB-lite"/>
    </source>
</evidence>
<proteinExistence type="inferred from homology"/>
<keyword id="KW-0274">FAD</keyword>
<keyword id="KW-0285">Flavoprotein</keyword>
<keyword id="KW-0520">NAD</keyword>
<keyword id="KW-0560">Oxidoreductase</keyword>
<sequence>MTTREYDYIICGAGSAGNVLATRLTEDPDVTVLLLEAGGPDYRFDFRTQMPAALAYPLQGRRYNWAYETDPEPHMDNRRMECGRGKGLGGSSLINGMCYIRGNALDYDNWSTHKGLENWTYLDCLPYFKKAETRDVGPNDYHGGNGPVSVTTSKPGVNPLFEAMVDAGVQAGYPRTDDLNGYQQEGFGPMDRTVTPKGRRASTARGYLDQAKVRPNLEIVTHALADRILFDGKRASGVTYLRGSERATAHARREVLVCSGAIASPQLLQRSGVGPGAWLKELDIPVVLDLPGVGQNLQDHLEMYIQYECKEPVSLYPALKWWNQPKIGLEWMLNGTGLGASNHFEAGGFIRTRDDDLWPNIQYHFLPVAINYNGSNAIEMHGFQAHVGSMRSPSRGRVKLRSRDPNDHPSILFNYMAEALDWREFRDAIRATREIMRQPALDRYRGRELNPGADCKSDKELDAFVRARAETAFHPSCSCKMGYDDMAVVDEEGRVHGLEGLRVVDASIMPIITTGNLNAPTIMIAEKIADKIRGRKALARVDVPYFVANGAMARNIAKAVRQPETV</sequence>
<name>BETA_BURL3</name>
<accession>Q39A44</accession>
<reference key="1">
    <citation type="submission" date="2005-10" db="EMBL/GenBank/DDBJ databases">
        <title>Complete sequence of chromosome 2 of Burkholderia sp. 383.</title>
        <authorList>
            <consortium name="US DOE Joint Genome Institute"/>
            <person name="Copeland A."/>
            <person name="Lucas S."/>
            <person name="Lapidus A."/>
            <person name="Barry K."/>
            <person name="Detter J.C."/>
            <person name="Glavina T."/>
            <person name="Hammon N."/>
            <person name="Israni S."/>
            <person name="Pitluck S."/>
            <person name="Chain P."/>
            <person name="Malfatti S."/>
            <person name="Shin M."/>
            <person name="Vergez L."/>
            <person name="Schmutz J."/>
            <person name="Larimer F."/>
            <person name="Land M."/>
            <person name="Kyrpides N."/>
            <person name="Lykidis A."/>
            <person name="Richardson P."/>
        </authorList>
    </citation>
    <scope>NUCLEOTIDE SEQUENCE [LARGE SCALE GENOMIC DNA]</scope>
    <source>
        <strain>ATCC 17760 / DSM 23089 / LMG 22485 / NCIMB 9086 / R18194 / 383</strain>
    </source>
</reference>
<feature type="chain" id="PRO_0000258921" description="Oxygen-dependent choline dehydrogenase">
    <location>
        <begin position="1"/>
        <end position="566"/>
    </location>
</feature>
<feature type="region of interest" description="Disordered" evidence="2">
    <location>
        <begin position="180"/>
        <end position="202"/>
    </location>
</feature>
<feature type="active site" description="Proton acceptor" evidence="1">
    <location>
        <position position="474"/>
    </location>
</feature>
<feature type="binding site" evidence="1">
    <location>
        <begin position="7"/>
        <end position="36"/>
    </location>
    <ligand>
        <name>FAD</name>
        <dbReference type="ChEBI" id="CHEBI:57692"/>
    </ligand>
</feature>
<gene>
    <name evidence="1" type="primary">betA</name>
    <name type="ordered locus">Bcep18194_B0553</name>
</gene>
<comment type="function">
    <text evidence="1">Involved in the biosynthesis of the osmoprotectant glycine betaine. Catalyzes the oxidation of choline to betaine aldehyde and betaine aldehyde to glycine betaine at the same rate.</text>
</comment>
<comment type="catalytic activity">
    <reaction evidence="1">
        <text>choline + A = betaine aldehyde + AH2</text>
        <dbReference type="Rhea" id="RHEA:17433"/>
        <dbReference type="ChEBI" id="CHEBI:13193"/>
        <dbReference type="ChEBI" id="CHEBI:15354"/>
        <dbReference type="ChEBI" id="CHEBI:15710"/>
        <dbReference type="ChEBI" id="CHEBI:17499"/>
        <dbReference type="EC" id="1.1.99.1"/>
    </reaction>
</comment>
<comment type="catalytic activity">
    <reaction evidence="1">
        <text>betaine aldehyde + NAD(+) + H2O = glycine betaine + NADH + 2 H(+)</text>
        <dbReference type="Rhea" id="RHEA:15305"/>
        <dbReference type="ChEBI" id="CHEBI:15377"/>
        <dbReference type="ChEBI" id="CHEBI:15378"/>
        <dbReference type="ChEBI" id="CHEBI:15710"/>
        <dbReference type="ChEBI" id="CHEBI:17750"/>
        <dbReference type="ChEBI" id="CHEBI:57540"/>
        <dbReference type="ChEBI" id="CHEBI:57945"/>
        <dbReference type="EC" id="1.2.1.8"/>
    </reaction>
</comment>
<comment type="cofactor">
    <cofactor evidence="1">
        <name>FAD</name>
        <dbReference type="ChEBI" id="CHEBI:57692"/>
    </cofactor>
</comment>
<comment type="pathway">
    <text evidence="1">Amine and polyamine biosynthesis; betaine biosynthesis via choline pathway; betaine aldehyde from choline (cytochrome c reductase route): step 1/1.</text>
</comment>
<comment type="similarity">
    <text evidence="1">Belongs to the GMC oxidoreductase family.</text>
</comment>